<dbReference type="EMBL" id="X59276">
    <property type="protein sequence ID" value="CAA41966.1"/>
    <property type="molecule type" value="mRNA"/>
</dbReference>
<dbReference type="EMBL" id="AP006727">
    <property type="protein sequence ID" value="BAD29646.1"/>
    <property type="molecule type" value="Genomic_DNA"/>
</dbReference>
<dbReference type="EMBL" id="AP014965">
    <property type="status" value="NOT_ANNOTATED_CDS"/>
    <property type="molecule type" value="Genomic_DNA"/>
</dbReference>
<dbReference type="PIR" id="S16554">
    <property type="entry name" value="S16554"/>
</dbReference>
<dbReference type="RefSeq" id="XP_015612602.1">
    <property type="nucleotide sequence ID" value="XM_015757116.1"/>
</dbReference>
<dbReference type="SMR" id="P25766"/>
<dbReference type="FunCoup" id="P25766">
    <property type="interactions" value="340"/>
</dbReference>
<dbReference type="STRING" id="39947.P25766"/>
<dbReference type="PaxDb" id="39947-P25766"/>
<dbReference type="InParanoid" id="P25766"/>
<dbReference type="OrthoDB" id="9989112at2759"/>
<dbReference type="Proteomes" id="UP000000763">
    <property type="component" value="Chromosome 9"/>
</dbReference>
<dbReference type="Proteomes" id="UP000059680">
    <property type="component" value="Chromosome 9"/>
</dbReference>
<dbReference type="GO" id="GO:0005768">
    <property type="term" value="C:endosome"/>
    <property type="evidence" value="ECO:0000318"/>
    <property type="project" value="GO_Central"/>
</dbReference>
<dbReference type="GO" id="GO:0005794">
    <property type="term" value="C:Golgi apparatus"/>
    <property type="evidence" value="ECO:0000318"/>
    <property type="project" value="GO_Central"/>
</dbReference>
<dbReference type="GO" id="GO:0005886">
    <property type="term" value="C:plasma membrane"/>
    <property type="evidence" value="ECO:0007669"/>
    <property type="project" value="UniProtKB-SubCell"/>
</dbReference>
<dbReference type="GO" id="GO:0005525">
    <property type="term" value="F:GTP binding"/>
    <property type="evidence" value="ECO:0000318"/>
    <property type="project" value="GO_Central"/>
</dbReference>
<dbReference type="GO" id="GO:0003924">
    <property type="term" value="F:GTPase activity"/>
    <property type="evidence" value="ECO:0000318"/>
    <property type="project" value="GO_Central"/>
</dbReference>
<dbReference type="CDD" id="cd01868">
    <property type="entry name" value="Rab11_like"/>
    <property type="match status" value="1"/>
</dbReference>
<dbReference type="FunFam" id="3.40.50.300:FF:000274">
    <property type="entry name" value="ras-related protein RABA5a"/>
    <property type="match status" value="1"/>
</dbReference>
<dbReference type="Gene3D" id="3.40.50.300">
    <property type="entry name" value="P-loop containing nucleotide triphosphate hydrolases"/>
    <property type="match status" value="1"/>
</dbReference>
<dbReference type="InterPro" id="IPR027417">
    <property type="entry name" value="P-loop_NTPase"/>
</dbReference>
<dbReference type="InterPro" id="IPR050209">
    <property type="entry name" value="Rab_GTPases_membrane_traffic"/>
</dbReference>
<dbReference type="InterPro" id="IPR005225">
    <property type="entry name" value="Small_GTP-bd"/>
</dbReference>
<dbReference type="InterPro" id="IPR001806">
    <property type="entry name" value="Small_GTPase"/>
</dbReference>
<dbReference type="NCBIfam" id="TIGR00231">
    <property type="entry name" value="small_GTP"/>
    <property type="match status" value="1"/>
</dbReference>
<dbReference type="PANTHER" id="PTHR47979">
    <property type="entry name" value="DRAB11-RELATED"/>
    <property type="match status" value="1"/>
</dbReference>
<dbReference type="Pfam" id="PF00071">
    <property type="entry name" value="Ras"/>
    <property type="match status" value="1"/>
</dbReference>
<dbReference type="PRINTS" id="PR00449">
    <property type="entry name" value="RASTRNSFRMNG"/>
</dbReference>
<dbReference type="SMART" id="SM00175">
    <property type="entry name" value="RAB"/>
    <property type="match status" value="1"/>
</dbReference>
<dbReference type="SMART" id="SM00176">
    <property type="entry name" value="RAN"/>
    <property type="match status" value="1"/>
</dbReference>
<dbReference type="SMART" id="SM00173">
    <property type="entry name" value="RAS"/>
    <property type="match status" value="1"/>
</dbReference>
<dbReference type="SMART" id="SM00174">
    <property type="entry name" value="RHO"/>
    <property type="match status" value="1"/>
</dbReference>
<dbReference type="SUPFAM" id="SSF52540">
    <property type="entry name" value="P-loop containing nucleoside triphosphate hydrolases"/>
    <property type="match status" value="1"/>
</dbReference>
<dbReference type="PROSITE" id="PS51419">
    <property type="entry name" value="RAB"/>
    <property type="match status" value="1"/>
</dbReference>
<comment type="function">
    <text>May play an important role in plant growth and development.</text>
</comment>
<comment type="subcellular location">
    <subcellularLocation>
        <location evidence="3">Cell membrane</location>
        <topology evidence="3">Lipid-anchor</topology>
        <orientation evidence="3">Cytoplasmic side</orientation>
    </subcellularLocation>
</comment>
<comment type="developmental stage">
    <text>During seedling RGP1 expression was first observed 14 days after germination, reaching a maximum level between 28 and 42 days, and gradually decreased thereafter until 63 days when it attained the same level of expression as in 14-day old seedlings.</text>
</comment>
<comment type="similarity">
    <text evidence="3">Belongs to the small GTPase superfamily. Rab family.</text>
</comment>
<sequence length="226" mass="24979">MSRGGGSYGEVGQKIDYVFKVVLIGDSAVGKSQLLARFARNEFNLDSKATIGVEFQTRTLHIDARTVKAQIWDTAGQERYRAVTSAYYRGAVGAMLVYDITKRQSFDHVARWLEELRGHADKNIVIMLIGNKSDLGTLRVVPTEDAKEFAERENLFFMETSALESTNVENAFMTVLTEIYRIVSKKNLVANEEVDSSGNSSLLKGTKIVVPGQEPAPPTKASCCMS</sequence>
<protein>
    <recommendedName>
        <fullName>Ras-related protein RGP1</fullName>
    </recommendedName>
    <alternativeName>
        <fullName>GTP-binding regulatory protein RGP1</fullName>
    </alternativeName>
</protein>
<name>RLGP1_ORYSJ</name>
<keyword id="KW-1003">Cell membrane</keyword>
<keyword id="KW-0342">GTP-binding</keyword>
<keyword id="KW-0449">Lipoprotein</keyword>
<keyword id="KW-0472">Membrane</keyword>
<keyword id="KW-0547">Nucleotide-binding</keyword>
<keyword id="KW-0636">Prenylation</keyword>
<keyword id="KW-1185">Reference proteome</keyword>
<reference key="1">
    <citation type="journal article" date="1991" name="Mol. Gen. Genet.">
        <title>A novel ras-related rgp1 gene encoding a GTP-binding protein has reduced expression in 5-azacytidine-induced dwarf rice.</title>
        <authorList>
            <person name="Sano H."/>
            <person name="Youssefian S."/>
        </authorList>
    </citation>
    <scope>NUCLEOTIDE SEQUENCE [MRNA]</scope>
    <source>
        <strain>cv. Gimbozu</strain>
    </source>
</reference>
<reference key="2">
    <citation type="journal article" date="2005" name="Nature">
        <title>The map-based sequence of the rice genome.</title>
        <authorList>
            <consortium name="International rice genome sequencing project (IRGSP)"/>
        </authorList>
    </citation>
    <scope>NUCLEOTIDE SEQUENCE [LARGE SCALE GENOMIC DNA]</scope>
    <source>
        <strain>cv. Nipponbare</strain>
    </source>
</reference>
<reference key="3">
    <citation type="journal article" date="2013" name="Rice">
        <title>Improvement of the Oryza sativa Nipponbare reference genome using next generation sequence and optical map data.</title>
        <authorList>
            <person name="Kawahara Y."/>
            <person name="de la Bastide M."/>
            <person name="Hamilton J.P."/>
            <person name="Kanamori H."/>
            <person name="McCombie W.R."/>
            <person name="Ouyang S."/>
            <person name="Schwartz D.C."/>
            <person name="Tanaka T."/>
            <person name="Wu J."/>
            <person name="Zhou S."/>
            <person name="Childs K.L."/>
            <person name="Davidson R.M."/>
            <person name="Lin H."/>
            <person name="Quesada-Ocampo L."/>
            <person name="Vaillancourt B."/>
            <person name="Sakai H."/>
            <person name="Lee S.S."/>
            <person name="Kim J."/>
            <person name="Numa H."/>
            <person name="Itoh T."/>
            <person name="Buell C.R."/>
            <person name="Matsumoto T."/>
        </authorList>
    </citation>
    <scope>GENOME REANNOTATION</scope>
    <source>
        <strain>cv. Nipponbare</strain>
    </source>
</reference>
<evidence type="ECO:0000250" key="1"/>
<evidence type="ECO:0000255" key="2"/>
<evidence type="ECO:0000305" key="3"/>
<gene>
    <name type="primary">RGP1</name>
    <name type="ordered locus">Os09g0281700</name>
    <name type="ordered locus">LOC_Os09g10940</name>
    <name type="ORF">P0645D04.22-1</name>
</gene>
<feature type="chain" id="PRO_0000121296" description="Ras-related protein RGP1">
    <location>
        <begin position="1"/>
        <end position="226"/>
    </location>
</feature>
<feature type="short sequence motif" description="Effector region" evidence="2">
    <location>
        <begin position="47"/>
        <end position="55"/>
    </location>
</feature>
<feature type="binding site" evidence="1">
    <location>
        <begin position="25"/>
        <end position="32"/>
    </location>
    <ligand>
        <name>GTP</name>
        <dbReference type="ChEBI" id="CHEBI:37565"/>
    </ligand>
</feature>
<feature type="binding site" evidence="1">
    <location>
        <begin position="73"/>
        <end position="77"/>
    </location>
    <ligand>
        <name>GTP</name>
        <dbReference type="ChEBI" id="CHEBI:37565"/>
    </ligand>
</feature>
<feature type="binding site" evidence="1">
    <location>
        <begin position="131"/>
        <end position="134"/>
    </location>
    <ligand>
        <name>GTP</name>
        <dbReference type="ChEBI" id="CHEBI:37565"/>
    </ligand>
</feature>
<feature type="lipid moiety-binding region" description="S-geranylgeranyl cysteine" evidence="1">
    <location>
        <position position="223"/>
    </location>
</feature>
<feature type="lipid moiety-binding region" description="S-geranylgeranyl cysteine" evidence="1">
    <location>
        <position position="224"/>
    </location>
</feature>
<feature type="sequence conflict" description="In Ref. 1; CAA41966." evidence="3" ref="1">
    <original>R</original>
    <variation>G</variation>
    <location>
        <position position="37"/>
    </location>
</feature>
<feature type="sequence conflict" description="In Ref. 1; CAA41966." evidence="3" ref="1">
    <original>IW</original>
    <variation>TR</variation>
    <location>
        <begin position="71"/>
        <end position="72"/>
    </location>
</feature>
<feature type="sequence conflict" description="In Ref. 1; CAA41966." evidence="3" ref="1">
    <original>V</original>
    <variation>L</variation>
    <location>
        <position position="168"/>
    </location>
</feature>
<organism>
    <name type="scientific">Oryza sativa subsp. japonica</name>
    <name type="common">Rice</name>
    <dbReference type="NCBI Taxonomy" id="39947"/>
    <lineage>
        <taxon>Eukaryota</taxon>
        <taxon>Viridiplantae</taxon>
        <taxon>Streptophyta</taxon>
        <taxon>Embryophyta</taxon>
        <taxon>Tracheophyta</taxon>
        <taxon>Spermatophyta</taxon>
        <taxon>Magnoliopsida</taxon>
        <taxon>Liliopsida</taxon>
        <taxon>Poales</taxon>
        <taxon>Poaceae</taxon>
        <taxon>BOP clade</taxon>
        <taxon>Oryzoideae</taxon>
        <taxon>Oryzeae</taxon>
        <taxon>Oryzinae</taxon>
        <taxon>Oryza</taxon>
        <taxon>Oryza sativa</taxon>
    </lineage>
</organism>
<accession>P25766</accession>
<accession>Q6ENK7</accession>
<proteinExistence type="evidence at transcript level"/>